<gene>
    <name evidence="1" type="primary">coaD</name>
    <name type="ordered locus">Shewmr4_3888</name>
</gene>
<comment type="function">
    <text evidence="1">Reversibly transfers an adenylyl group from ATP to 4'-phosphopantetheine, yielding dephospho-CoA (dPCoA) and pyrophosphate.</text>
</comment>
<comment type="catalytic activity">
    <reaction evidence="1">
        <text>(R)-4'-phosphopantetheine + ATP + H(+) = 3'-dephospho-CoA + diphosphate</text>
        <dbReference type="Rhea" id="RHEA:19801"/>
        <dbReference type="ChEBI" id="CHEBI:15378"/>
        <dbReference type="ChEBI" id="CHEBI:30616"/>
        <dbReference type="ChEBI" id="CHEBI:33019"/>
        <dbReference type="ChEBI" id="CHEBI:57328"/>
        <dbReference type="ChEBI" id="CHEBI:61723"/>
        <dbReference type="EC" id="2.7.7.3"/>
    </reaction>
</comment>
<comment type="cofactor">
    <cofactor evidence="1">
        <name>Mg(2+)</name>
        <dbReference type="ChEBI" id="CHEBI:18420"/>
    </cofactor>
</comment>
<comment type="pathway">
    <text evidence="1">Cofactor biosynthesis; coenzyme A biosynthesis; CoA from (R)-pantothenate: step 4/5.</text>
</comment>
<comment type="subunit">
    <text evidence="1">Homohexamer.</text>
</comment>
<comment type="subcellular location">
    <subcellularLocation>
        <location evidence="1">Cytoplasm</location>
    </subcellularLocation>
</comment>
<comment type="similarity">
    <text evidence="1">Belongs to the bacterial CoaD family.</text>
</comment>
<evidence type="ECO:0000255" key="1">
    <source>
        <dbReference type="HAMAP-Rule" id="MF_00151"/>
    </source>
</evidence>
<dbReference type="EC" id="2.7.7.3" evidence="1"/>
<dbReference type="EMBL" id="CP000446">
    <property type="protein sequence ID" value="ABI40951.1"/>
    <property type="molecule type" value="Genomic_DNA"/>
</dbReference>
<dbReference type="RefSeq" id="WP_011624609.1">
    <property type="nucleotide sequence ID" value="NC_008321.1"/>
</dbReference>
<dbReference type="SMR" id="Q0HDB6"/>
<dbReference type="KEGG" id="she:Shewmr4_3888"/>
<dbReference type="HOGENOM" id="CLU_100149_0_1_6"/>
<dbReference type="UniPathway" id="UPA00241">
    <property type="reaction ID" value="UER00355"/>
</dbReference>
<dbReference type="GO" id="GO:0005737">
    <property type="term" value="C:cytoplasm"/>
    <property type="evidence" value="ECO:0007669"/>
    <property type="project" value="UniProtKB-SubCell"/>
</dbReference>
<dbReference type="GO" id="GO:0005524">
    <property type="term" value="F:ATP binding"/>
    <property type="evidence" value="ECO:0007669"/>
    <property type="project" value="UniProtKB-KW"/>
</dbReference>
<dbReference type="GO" id="GO:0004595">
    <property type="term" value="F:pantetheine-phosphate adenylyltransferase activity"/>
    <property type="evidence" value="ECO:0007669"/>
    <property type="project" value="UniProtKB-UniRule"/>
</dbReference>
<dbReference type="GO" id="GO:0015937">
    <property type="term" value="P:coenzyme A biosynthetic process"/>
    <property type="evidence" value="ECO:0007669"/>
    <property type="project" value="UniProtKB-UniRule"/>
</dbReference>
<dbReference type="CDD" id="cd02163">
    <property type="entry name" value="PPAT"/>
    <property type="match status" value="1"/>
</dbReference>
<dbReference type="FunFam" id="3.40.50.620:FF:000012">
    <property type="entry name" value="Phosphopantetheine adenylyltransferase"/>
    <property type="match status" value="1"/>
</dbReference>
<dbReference type="Gene3D" id="3.40.50.620">
    <property type="entry name" value="HUPs"/>
    <property type="match status" value="1"/>
</dbReference>
<dbReference type="HAMAP" id="MF_00151">
    <property type="entry name" value="PPAT_bact"/>
    <property type="match status" value="1"/>
</dbReference>
<dbReference type="InterPro" id="IPR004821">
    <property type="entry name" value="Cyt_trans-like"/>
</dbReference>
<dbReference type="InterPro" id="IPR001980">
    <property type="entry name" value="PPAT"/>
</dbReference>
<dbReference type="InterPro" id="IPR014729">
    <property type="entry name" value="Rossmann-like_a/b/a_fold"/>
</dbReference>
<dbReference type="NCBIfam" id="TIGR01510">
    <property type="entry name" value="coaD_prev_kdtB"/>
    <property type="match status" value="1"/>
</dbReference>
<dbReference type="NCBIfam" id="TIGR00125">
    <property type="entry name" value="cyt_tran_rel"/>
    <property type="match status" value="1"/>
</dbReference>
<dbReference type="PANTHER" id="PTHR21342">
    <property type="entry name" value="PHOSPHOPANTETHEINE ADENYLYLTRANSFERASE"/>
    <property type="match status" value="1"/>
</dbReference>
<dbReference type="PANTHER" id="PTHR21342:SF1">
    <property type="entry name" value="PHOSPHOPANTETHEINE ADENYLYLTRANSFERASE"/>
    <property type="match status" value="1"/>
</dbReference>
<dbReference type="Pfam" id="PF01467">
    <property type="entry name" value="CTP_transf_like"/>
    <property type="match status" value="1"/>
</dbReference>
<dbReference type="PRINTS" id="PR01020">
    <property type="entry name" value="LPSBIOSNTHSS"/>
</dbReference>
<dbReference type="SUPFAM" id="SSF52374">
    <property type="entry name" value="Nucleotidylyl transferase"/>
    <property type="match status" value="1"/>
</dbReference>
<protein>
    <recommendedName>
        <fullName evidence="1">Phosphopantetheine adenylyltransferase</fullName>
        <ecNumber evidence="1">2.7.7.3</ecNumber>
    </recommendedName>
    <alternativeName>
        <fullName evidence="1">Dephospho-CoA pyrophosphorylase</fullName>
    </alternativeName>
    <alternativeName>
        <fullName evidence="1">Pantetheine-phosphate adenylyltransferase</fullName>
        <shortName evidence="1">PPAT</shortName>
    </alternativeName>
</protein>
<accession>Q0HDB6</accession>
<name>COAD_SHESM</name>
<proteinExistence type="inferred from homology"/>
<organism>
    <name type="scientific">Shewanella sp. (strain MR-4)</name>
    <dbReference type="NCBI Taxonomy" id="60480"/>
    <lineage>
        <taxon>Bacteria</taxon>
        <taxon>Pseudomonadati</taxon>
        <taxon>Pseudomonadota</taxon>
        <taxon>Gammaproteobacteria</taxon>
        <taxon>Alteromonadales</taxon>
        <taxon>Shewanellaceae</taxon>
        <taxon>Shewanella</taxon>
    </lineage>
</organism>
<sequence length="163" mass="17936">MHTRAIYPGTFDPITNGHADLIERAAKLFKHVIIGIAANPSKQPRFTLEERVELVNRVTAHLDNVEVVGFSGLLVDFAKEQRASVLVRGLRAVSDFEYEFQLANMNRRLSPDLESVFLTPAEENSFISSTLVKEVALHGGDVSQFVHPEVASALAAKLNLAKA</sequence>
<keyword id="KW-0067">ATP-binding</keyword>
<keyword id="KW-0173">Coenzyme A biosynthesis</keyword>
<keyword id="KW-0963">Cytoplasm</keyword>
<keyword id="KW-0460">Magnesium</keyword>
<keyword id="KW-0547">Nucleotide-binding</keyword>
<keyword id="KW-0548">Nucleotidyltransferase</keyword>
<keyword id="KW-0808">Transferase</keyword>
<reference key="1">
    <citation type="submission" date="2006-08" db="EMBL/GenBank/DDBJ databases">
        <title>Complete sequence of Shewanella sp. MR-4.</title>
        <authorList>
            <consortium name="US DOE Joint Genome Institute"/>
            <person name="Copeland A."/>
            <person name="Lucas S."/>
            <person name="Lapidus A."/>
            <person name="Barry K."/>
            <person name="Detter J.C."/>
            <person name="Glavina del Rio T."/>
            <person name="Hammon N."/>
            <person name="Israni S."/>
            <person name="Dalin E."/>
            <person name="Tice H."/>
            <person name="Pitluck S."/>
            <person name="Kiss H."/>
            <person name="Brettin T."/>
            <person name="Bruce D."/>
            <person name="Han C."/>
            <person name="Tapia R."/>
            <person name="Gilna P."/>
            <person name="Schmutz J."/>
            <person name="Larimer F."/>
            <person name="Land M."/>
            <person name="Hauser L."/>
            <person name="Kyrpides N."/>
            <person name="Mikhailova N."/>
            <person name="Nealson K."/>
            <person name="Konstantinidis K."/>
            <person name="Klappenbach J."/>
            <person name="Tiedje J."/>
            <person name="Richardson P."/>
        </authorList>
    </citation>
    <scope>NUCLEOTIDE SEQUENCE [LARGE SCALE GENOMIC DNA]</scope>
    <source>
        <strain>MR-4</strain>
    </source>
</reference>
<feature type="chain" id="PRO_1000011235" description="Phosphopantetheine adenylyltransferase">
    <location>
        <begin position="1"/>
        <end position="163"/>
    </location>
</feature>
<feature type="binding site" evidence="1">
    <location>
        <begin position="10"/>
        <end position="11"/>
    </location>
    <ligand>
        <name>ATP</name>
        <dbReference type="ChEBI" id="CHEBI:30616"/>
    </ligand>
</feature>
<feature type="binding site" evidence="1">
    <location>
        <position position="10"/>
    </location>
    <ligand>
        <name>substrate</name>
    </ligand>
</feature>
<feature type="binding site" evidence="1">
    <location>
        <position position="18"/>
    </location>
    <ligand>
        <name>ATP</name>
        <dbReference type="ChEBI" id="CHEBI:30616"/>
    </ligand>
</feature>
<feature type="binding site" evidence="1">
    <location>
        <position position="42"/>
    </location>
    <ligand>
        <name>substrate</name>
    </ligand>
</feature>
<feature type="binding site" evidence="1">
    <location>
        <position position="74"/>
    </location>
    <ligand>
        <name>substrate</name>
    </ligand>
</feature>
<feature type="binding site" evidence="1">
    <location>
        <position position="88"/>
    </location>
    <ligand>
        <name>substrate</name>
    </ligand>
</feature>
<feature type="binding site" evidence="1">
    <location>
        <begin position="89"/>
        <end position="91"/>
    </location>
    <ligand>
        <name>ATP</name>
        <dbReference type="ChEBI" id="CHEBI:30616"/>
    </ligand>
</feature>
<feature type="binding site" evidence="1">
    <location>
        <position position="99"/>
    </location>
    <ligand>
        <name>ATP</name>
        <dbReference type="ChEBI" id="CHEBI:30616"/>
    </ligand>
</feature>
<feature type="binding site" evidence="1">
    <location>
        <begin position="124"/>
        <end position="130"/>
    </location>
    <ligand>
        <name>ATP</name>
        <dbReference type="ChEBI" id="CHEBI:30616"/>
    </ligand>
</feature>
<feature type="site" description="Transition state stabilizer" evidence="1">
    <location>
        <position position="18"/>
    </location>
</feature>